<reference key="1">
    <citation type="journal article" date="2006" name="BMC Genomics">
        <title>Complete genome sequence of Shigella flexneri 5b and comparison with Shigella flexneri 2a.</title>
        <authorList>
            <person name="Nie H."/>
            <person name="Yang F."/>
            <person name="Zhang X."/>
            <person name="Yang J."/>
            <person name="Chen L."/>
            <person name="Wang J."/>
            <person name="Xiong Z."/>
            <person name="Peng J."/>
            <person name="Sun L."/>
            <person name="Dong J."/>
            <person name="Xue Y."/>
            <person name="Xu X."/>
            <person name="Chen S."/>
            <person name="Yao Z."/>
            <person name="Shen Y."/>
            <person name="Jin Q."/>
        </authorList>
    </citation>
    <scope>NUCLEOTIDE SEQUENCE [LARGE SCALE GENOMIC DNA]</scope>
    <source>
        <strain>8401</strain>
    </source>
</reference>
<comment type="function">
    <text evidence="1">Transcriptional repressor of the nikABCDE operon. Is active in the presence of excessive concentrations of intracellular nickel.</text>
</comment>
<comment type="cofactor">
    <cofactor evidence="1">
        <name>Ni(2+)</name>
        <dbReference type="ChEBI" id="CHEBI:49786"/>
    </cofactor>
    <text evidence="1">Binds 1 nickel ion per subunit.</text>
</comment>
<comment type="subunit">
    <text evidence="1">Homotetramer.</text>
</comment>
<comment type="similarity">
    <text evidence="1">Belongs to the transcriptional regulatory CopG/NikR family.</text>
</comment>
<organism>
    <name type="scientific">Shigella flexneri serotype 5b (strain 8401)</name>
    <dbReference type="NCBI Taxonomy" id="373384"/>
    <lineage>
        <taxon>Bacteria</taxon>
        <taxon>Pseudomonadati</taxon>
        <taxon>Pseudomonadota</taxon>
        <taxon>Gammaproteobacteria</taxon>
        <taxon>Enterobacterales</taxon>
        <taxon>Enterobacteriaceae</taxon>
        <taxon>Shigella</taxon>
    </lineage>
</organism>
<protein>
    <recommendedName>
        <fullName evidence="1">Nickel-responsive regulator</fullName>
    </recommendedName>
</protein>
<dbReference type="EMBL" id="CP000266">
    <property type="protein sequence ID" value="ABF05523.1"/>
    <property type="molecule type" value="Genomic_DNA"/>
</dbReference>
<dbReference type="RefSeq" id="WP_001190062.1">
    <property type="nucleotide sequence ID" value="NC_008258.1"/>
</dbReference>
<dbReference type="SMR" id="Q0SZJ2"/>
<dbReference type="GeneID" id="93778510"/>
<dbReference type="KEGG" id="sfv:SFV_3484"/>
<dbReference type="HOGENOM" id="CLU_113319_1_4_6"/>
<dbReference type="Proteomes" id="UP000000659">
    <property type="component" value="Chromosome"/>
</dbReference>
<dbReference type="GO" id="GO:0003700">
    <property type="term" value="F:DNA-binding transcription factor activity"/>
    <property type="evidence" value="ECO:0007669"/>
    <property type="project" value="UniProtKB-UniRule"/>
</dbReference>
<dbReference type="GO" id="GO:0016151">
    <property type="term" value="F:nickel cation binding"/>
    <property type="evidence" value="ECO:0007669"/>
    <property type="project" value="UniProtKB-UniRule"/>
</dbReference>
<dbReference type="GO" id="GO:0043565">
    <property type="term" value="F:sequence-specific DNA binding"/>
    <property type="evidence" value="ECO:0007669"/>
    <property type="project" value="UniProtKB-ARBA"/>
</dbReference>
<dbReference type="GO" id="GO:0010045">
    <property type="term" value="P:response to nickel cation"/>
    <property type="evidence" value="ECO:0007669"/>
    <property type="project" value="InterPro"/>
</dbReference>
<dbReference type="CDD" id="cd22231">
    <property type="entry name" value="RHH_NikR_HicB-like"/>
    <property type="match status" value="1"/>
</dbReference>
<dbReference type="FunFam" id="1.10.1220.10:FF:000001">
    <property type="entry name" value="Nickel-responsive regulator"/>
    <property type="match status" value="1"/>
</dbReference>
<dbReference type="FunFam" id="3.30.70.1150:FF:000002">
    <property type="entry name" value="Nickel-responsive regulator"/>
    <property type="match status" value="1"/>
</dbReference>
<dbReference type="Gene3D" id="3.30.70.1150">
    <property type="entry name" value="ACT-like. Chain A, domain 2"/>
    <property type="match status" value="1"/>
</dbReference>
<dbReference type="Gene3D" id="1.10.1220.10">
    <property type="entry name" value="Met repressor-like"/>
    <property type="match status" value="1"/>
</dbReference>
<dbReference type="HAMAP" id="MF_00476">
    <property type="entry name" value="NikR"/>
    <property type="match status" value="1"/>
</dbReference>
<dbReference type="InterPro" id="IPR027271">
    <property type="entry name" value="Acetolactate_synth/TF_NikR_C"/>
</dbReference>
<dbReference type="InterPro" id="IPR045865">
    <property type="entry name" value="ACT-like_dom_sf"/>
</dbReference>
<dbReference type="InterPro" id="IPR013321">
    <property type="entry name" value="Arc_rbn_hlx_hlx"/>
</dbReference>
<dbReference type="InterPro" id="IPR002145">
    <property type="entry name" value="CopG"/>
</dbReference>
<dbReference type="InterPro" id="IPR050192">
    <property type="entry name" value="CopG/NikR_regulator"/>
</dbReference>
<dbReference type="InterPro" id="IPR022988">
    <property type="entry name" value="Ni_resp_reg_NikR"/>
</dbReference>
<dbReference type="InterPro" id="IPR014160">
    <property type="entry name" value="Nickel_NikR_proteobac"/>
</dbReference>
<dbReference type="InterPro" id="IPR010985">
    <property type="entry name" value="Ribbon_hlx_hlx"/>
</dbReference>
<dbReference type="InterPro" id="IPR014864">
    <property type="entry name" value="TF_NikR_Ni-bd_C"/>
</dbReference>
<dbReference type="NCBIfam" id="TIGR02793">
    <property type="entry name" value="nikR"/>
    <property type="match status" value="1"/>
</dbReference>
<dbReference type="NCBIfam" id="NF002815">
    <property type="entry name" value="PRK02967.1"/>
    <property type="match status" value="1"/>
</dbReference>
<dbReference type="NCBIfam" id="NF003381">
    <property type="entry name" value="PRK04460.1"/>
    <property type="match status" value="1"/>
</dbReference>
<dbReference type="PANTHER" id="PTHR34719">
    <property type="entry name" value="NICKEL-RESPONSIVE REGULATOR"/>
    <property type="match status" value="1"/>
</dbReference>
<dbReference type="PANTHER" id="PTHR34719:SF2">
    <property type="entry name" value="NICKEL-RESPONSIVE REGULATOR"/>
    <property type="match status" value="1"/>
</dbReference>
<dbReference type="Pfam" id="PF08753">
    <property type="entry name" value="NikR_C"/>
    <property type="match status" value="1"/>
</dbReference>
<dbReference type="Pfam" id="PF01402">
    <property type="entry name" value="RHH_1"/>
    <property type="match status" value="1"/>
</dbReference>
<dbReference type="SUPFAM" id="SSF55021">
    <property type="entry name" value="ACT-like"/>
    <property type="match status" value="1"/>
</dbReference>
<dbReference type="SUPFAM" id="SSF47598">
    <property type="entry name" value="Ribbon-helix-helix"/>
    <property type="match status" value="1"/>
</dbReference>
<sequence>MQRVTITLDDDLLETLDSLSQRRGYNNRSEAIRDILRSALAQEATQQHGTQGFAVLSYVYEHEKRDLASRIVSTQHHHHDLSVATLHVHINHDDCLEIAVLKGDMGDVQHFADDVIAQRGVRHGHLQCLPKED</sequence>
<feature type="chain" id="PRO_1000014081" description="Nickel-responsive regulator">
    <location>
        <begin position="1"/>
        <end position="133"/>
    </location>
</feature>
<feature type="binding site" evidence="1">
    <location>
        <position position="76"/>
    </location>
    <ligand>
        <name>Ni(2+)</name>
        <dbReference type="ChEBI" id="CHEBI:49786"/>
    </ligand>
</feature>
<feature type="binding site" evidence="1">
    <location>
        <position position="87"/>
    </location>
    <ligand>
        <name>Ni(2+)</name>
        <dbReference type="ChEBI" id="CHEBI:49786"/>
    </ligand>
</feature>
<feature type="binding site" evidence="1">
    <location>
        <position position="89"/>
    </location>
    <ligand>
        <name>Ni(2+)</name>
        <dbReference type="ChEBI" id="CHEBI:49786"/>
    </ligand>
</feature>
<feature type="binding site" evidence="1">
    <location>
        <position position="95"/>
    </location>
    <ligand>
        <name>Ni(2+)</name>
        <dbReference type="ChEBI" id="CHEBI:49786"/>
    </ligand>
</feature>
<keyword id="KW-0238">DNA-binding</keyword>
<keyword id="KW-0479">Metal-binding</keyword>
<keyword id="KW-0533">Nickel</keyword>
<keyword id="KW-0678">Repressor</keyword>
<keyword id="KW-0804">Transcription</keyword>
<keyword id="KW-0805">Transcription regulation</keyword>
<accession>Q0SZJ2</accession>
<evidence type="ECO:0000255" key="1">
    <source>
        <dbReference type="HAMAP-Rule" id="MF_00476"/>
    </source>
</evidence>
<proteinExistence type="inferred from homology"/>
<name>NIKR_SHIF8</name>
<gene>
    <name evidence="1" type="primary">nikR</name>
    <name type="ordered locus">SFV_3484</name>
</gene>